<sequence>MEQHLDAYCMHLRSERQVSPHTLEAYRRDLSKVLAYCQKARLSSWNDLDIQHLRSFTARQHQQGQSSRSLARMLSAVRGFYKYLNREGLCQHDPANGLSPPKGERRLPKTLDTDRTAQLLDGGVEDDFLAHRDQAIMELLYSSGLRLSELTGLNLDQLDLRDGLVQVLGKGSKTRVLPVGSKARQALETWLPLRALTNPQDDAVFVSQQGKRLGPRAVQLRIKTAGERELGQNLHPHMLRHSFASHLLESSQDLRAVQELLGHADIKTTQIYTHLDFQHLATVYDSAHPRAKRKGAADD</sequence>
<organism>
    <name type="scientific">Pseudomonas syringae pv. tomato (strain ATCC BAA-871 / DC3000)</name>
    <dbReference type="NCBI Taxonomy" id="223283"/>
    <lineage>
        <taxon>Bacteria</taxon>
        <taxon>Pseudomonadati</taxon>
        <taxon>Pseudomonadota</taxon>
        <taxon>Gammaproteobacteria</taxon>
        <taxon>Pseudomonadales</taxon>
        <taxon>Pseudomonadaceae</taxon>
        <taxon>Pseudomonas</taxon>
    </lineage>
</organism>
<gene>
    <name evidence="1" type="primary">xerC</name>
    <name type="ordered locus">PSPTO_0222</name>
    <name type="ORF">PSPTO0222</name>
</gene>
<reference key="1">
    <citation type="journal article" date="2003" name="Proc. Natl. Acad. Sci. U.S.A.">
        <title>The complete genome sequence of the Arabidopsis and tomato pathogen Pseudomonas syringae pv. tomato DC3000.</title>
        <authorList>
            <person name="Buell C.R."/>
            <person name="Joardar V."/>
            <person name="Lindeberg M."/>
            <person name="Selengut J."/>
            <person name="Paulsen I.T."/>
            <person name="Gwinn M.L."/>
            <person name="Dodson R.J."/>
            <person name="DeBoy R.T."/>
            <person name="Durkin A.S."/>
            <person name="Kolonay J.F."/>
            <person name="Madupu R."/>
            <person name="Daugherty S.C."/>
            <person name="Brinkac L.M."/>
            <person name="Beanan M.J."/>
            <person name="Haft D.H."/>
            <person name="Nelson W.C."/>
            <person name="Davidsen T.M."/>
            <person name="Zafar N."/>
            <person name="Zhou L."/>
            <person name="Liu J."/>
            <person name="Yuan Q."/>
            <person name="Khouri H.M."/>
            <person name="Fedorova N.B."/>
            <person name="Tran B."/>
            <person name="Russell D."/>
            <person name="Berry K.J."/>
            <person name="Utterback T.R."/>
            <person name="Van Aken S.E."/>
            <person name="Feldblyum T.V."/>
            <person name="D'Ascenzo M."/>
            <person name="Deng W.-L."/>
            <person name="Ramos A.R."/>
            <person name="Alfano J.R."/>
            <person name="Cartinhour S."/>
            <person name="Chatterjee A.K."/>
            <person name="Delaney T.P."/>
            <person name="Lazarowitz S.G."/>
            <person name="Martin G.B."/>
            <person name="Schneider D.J."/>
            <person name="Tang X."/>
            <person name="Bender C.L."/>
            <person name="White O."/>
            <person name="Fraser C.M."/>
            <person name="Collmer A."/>
        </authorList>
    </citation>
    <scope>NUCLEOTIDE SEQUENCE [LARGE SCALE GENOMIC DNA]</scope>
    <source>
        <strain>ATCC BAA-871 / DC3000</strain>
    </source>
</reference>
<accession>Q88B11</accession>
<evidence type="ECO:0000255" key="1">
    <source>
        <dbReference type="HAMAP-Rule" id="MF_01808"/>
    </source>
</evidence>
<evidence type="ECO:0000255" key="2">
    <source>
        <dbReference type="PROSITE-ProRule" id="PRU01246"/>
    </source>
</evidence>
<evidence type="ECO:0000255" key="3">
    <source>
        <dbReference type="PROSITE-ProRule" id="PRU01248"/>
    </source>
</evidence>
<dbReference type="EMBL" id="AE016853">
    <property type="protein sequence ID" value="AAO53768.1"/>
    <property type="molecule type" value="Genomic_DNA"/>
</dbReference>
<dbReference type="RefSeq" id="NP_790073.1">
    <property type="nucleotide sequence ID" value="NC_004578.1"/>
</dbReference>
<dbReference type="RefSeq" id="WP_007246535.1">
    <property type="nucleotide sequence ID" value="NC_004578.1"/>
</dbReference>
<dbReference type="SMR" id="Q88B11"/>
<dbReference type="STRING" id="223283.PSPTO_0222"/>
<dbReference type="GeneID" id="1181830"/>
<dbReference type="KEGG" id="pst:PSPTO_0222"/>
<dbReference type="PATRIC" id="fig|223283.9.peg.231"/>
<dbReference type="eggNOG" id="COG4973">
    <property type="taxonomic scope" value="Bacteria"/>
</dbReference>
<dbReference type="HOGENOM" id="CLU_027562_9_0_6"/>
<dbReference type="OrthoDB" id="9801717at2"/>
<dbReference type="PhylomeDB" id="Q88B11"/>
<dbReference type="Proteomes" id="UP000002515">
    <property type="component" value="Chromosome"/>
</dbReference>
<dbReference type="GO" id="GO:0005737">
    <property type="term" value="C:cytoplasm"/>
    <property type="evidence" value="ECO:0007669"/>
    <property type="project" value="UniProtKB-SubCell"/>
</dbReference>
<dbReference type="GO" id="GO:0003677">
    <property type="term" value="F:DNA binding"/>
    <property type="evidence" value="ECO:0007669"/>
    <property type="project" value="UniProtKB-KW"/>
</dbReference>
<dbReference type="GO" id="GO:0009037">
    <property type="term" value="F:tyrosine-based site-specific recombinase activity"/>
    <property type="evidence" value="ECO:0007669"/>
    <property type="project" value="UniProtKB-UniRule"/>
</dbReference>
<dbReference type="GO" id="GO:0051301">
    <property type="term" value="P:cell division"/>
    <property type="evidence" value="ECO:0007669"/>
    <property type="project" value="UniProtKB-KW"/>
</dbReference>
<dbReference type="GO" id="GO:0007059">
    <property type="term" value="P:chromosome segregation"/>
    <property type="evidence" value="ECO:0007669"/>
    <property type="project" value="UniProtKB-UniRule"/>
</dbReference>
<dbReference type="GO" id="GO:0006313">
    <property type="term" value="P:DNA transposition"/>
    <property type="evidence" value="ECO:0007669"/>
    <property type="project" value="UniProtKB-UniRule"/>
</dbReference>
<dbReference type="CDD" id="cd00798">
    <property type="entry name" value="INT_XerDC_C"/>
    <property type="match status" value="1"/>
</dbReference>
<dbReference type="Gene3D" id="1.10.150.130">
    <property type="match status" value="1"/>
</dbReference>
<dbReference type="Gene3D" id="1.10.443.10">
    <property type="entry name" value="Intergrase catalytic core"/>
    <property type="match status" value="1"/>
</dbReference>
<dbReference type="HAMAP" id="MF_01808">
    <property type="entry name" value="Recomb_XerC_XerD"/>
    <property type="match status" value="1"/>
</dbReference>
<dbReference type="InterPro" id="IPR044068">
    <property type="entry name" value="CB"/>
</dbReference>
<dbReference type="InterPro" id="IPR011010">
    <property type="entry name" value="DNA_brk_join_enz"/>
</dbReference>
<dbReference type="InterPro" id="IPR013762">
    <property type="entry name" value="Integrase-like_cat_sf"/>
</dbReference>
<dbReference type="InterPro" id="IPR002104">
    <property type="entry name" value="Integrase_catalytic"/>
</dbReference>
<dbReference type="InterPro" id="IPR010998">
    <property type="entry name" value="Integrase_recombinase_N"/>
</dbReference>
<dbReference type="InterPro" id="IPR004107">
    <property type="entry name" value="Integrase_SAM-like_N"/>
</dbReference>
<dbReference type="InterPro" id="IPR011931">
    <property type="entry name" value="Recomb_XerC"/>
</dbReference>
<dbReference type="InterPro" id="IPR023009">
    <property type="entry name" value="Tyrosine_recombinase_XerC/XerD"/>
</dbReference>
<dbReference type="InterPro" id="IPR050090">
    <property type="entry name" value="Tyrosine_recombinase_XerCD"/>
</dbReference>
<dbReference type="NCBIfam" id="NF001399">
    <property type="entry name" value="PRK00283.1"/>
    <property type="match status" value="1"/>
</dbReference>
<dbReference type="NCBIfam" id="TIGR02224">
    <property type="entry name" value="recomb_XerC"/>
    <property type="match status" value="1"/>
</dbReference>
<dbReference type="PANTHER" id="PTHR30349">
    <property type="entry name" value="PHAGE INTEGRASE-RELATED"/>
    <property type="match status" value="1"/>
</dbReference>
<dbReference type="PANTHER" id="PTHR30349:SF81">
    <property type="entry name" value="TYROSINE RECOMBINASE XERC"/>
    <property type="match status" value="1"/>
</dbReference>
<dbReference type="Pfam" id="PF02899">
    <property type="entry name" value="Phage_int_SAM_1"/>
    <property type="match status" value="1"/>
</dbReference>
<dbReference type="Pfam" id="PF00589">
    <property type="entry name" value="Phage_integrase"/>
    <property type="match status" value="1"/>
</dbReference>
<dbReference type="SUPFAM" id="SSF56349">
    <property type="entry name" value="DNA breaking-rejoining enzymes"/>
    <property type="match status" value="1"/>
</dbReference>
<dbReference type="PROSITE" id="PS51900">
    <property type="entry name" value="CB"/>
    <property type="match status" value="1"/>
</dbReference>
<dbReference type="PROSITE" id="PS51898">
    <property type="entry name" value="TYR_RECOMBINASE"/>
    <property type="match status" value="1"/>
</dbReference>
<comment type="function">
    <text evidence="1">Site-specific tyrosine recombinase, which acts by catalyzing the cutting and rejoining of the recombining DNA molecules. The XerC-XerD complex is essential to convert dimers of the bacterial chromosome into monomers to permit their segregation at cell division. It also contributes to the segregational stability of plasmids.</text>
</comment>
<comment type="subunit">
    <text evidence="1">Forms a cyclic heterotetrameric complex composed of two molecules of XerC and two molecules of XerD.</text>
</comment>
<comment type="subcellular location">
    <subcellularLocation>
        <location evidence="1">Cytoplasm</location>
    </subcellularLocation>
</comment>
<comment type="similarity">
    <text evidence="1">Belongs to the 'phage' integrase family. XerC subfamily.</text>
</comment>
<feature type="chain" id="PRO_1000187609" description="Tyrosine recombinase XerC">
    <location>
        <begin position="1"/>
        <end position="299"/>
    </location>
</feature>
<feature type="domain" description="Core-binding (CB)" evidence="3">
    <location>
        <begin position="1"/>
        <end position="85"/>
    </location>
</feature>
<feature type="domain" description="Tyr recombinase" evidence="2">
    <location>
        <begin position="106"/>
        <end position="285"/>
    </location>
</feature>
<feature type="active site" evidence="1">
    <location>
        <position position="146"/>
    </location>
</feature>
<feature type="active site" evidence="1">
    <location>
        <position position="170"/>
    </location>
</feature>
<feature type="active site" evidence="1">
    <location>
        <position position="237"/>
    </location>
</feature>
<feature type="active site" evidence="1">
    <location>
        <position position="240"/>
    </location>
</feature>
<feature type="active site" evidence="1">
    <location>
        <position position="263"/>
    </location>
</feature>
<feature type="active site" description="O-(3'-phospho-DNA)-tyrosine intermediate" evidence="1">
    <location>
        <position position="272"/>
    </location>
</feature>
<name>XERC_PSESM</name>
<protein>
    <recommendedName>
        <fullName evidence="1">Tyrosine recombinase XerC</fullName>
    </recommendedName>
</protein>
<proteinExistence type="inferred from homology"/>
<keyword id="KW-0131">Cell cycle</keyword>
<keyword id="KW-0132">Cell division</keyword>
<keyword id="KW-0159">Chromosome partition</keyword>
<keyword id="KW-0963">Cytoplasm</keyword>
<keyword id="KW-0229">DNA integration</keyword>
<keyword id="KW-0233">DNA recombination</keyword>
<keyword id="KW-0238">DNA-binding</keyword>
<keyword id="KW-1185">Reference proteome</keyword>